<feature type="chain" id="PRO_0000343092" description="Exportin-T">
    <location>
        <begin position="1"/>
        <end position="1000"/>
    </location>
</feature>
<gene>
    <name type="primary">LOS1</name>
    <name type="ordered locus">DEHA2F16192g</name>
</gene>
<protein>
    <recommendedName>
        <fullName>Exportin-T</fullName>
    </recommendedName>
    <alternativeName>
        <fullName>Exportin(tRNA)</fullName>
    </alternativeName>
    <alternativeName>
        <fullName>Karyopherin-beta</fullName>
    </alternativeName>
    <alternativeName>
        <fullName>tRNA exportin</fullName>
    </alternativeName>
</protein>
<reference key="1">
    <citation type="journal article" date="2004" name="Nature">
        <title>Genome evolution in yeasts.</title>
        <authorList>
            <person name="Dujon B."/>
            <person name="Sherman D."/>
            <person name="Fischer G."/>
            <person name="Durrens P."/>
            <person name="Casaregola S."/>
            <person name="Lafontaine I."/>
            <person name="de Montigny J."/>
            <person name="Marck C."/>
            <person name="Neuveglise C."/>
            <person name="Talla E."/>
            <person name="Goffard N."/>
            <person name="Frangeul L."/>
            <person name="Aigle M."/>
            <person name="Anthouard V."/>
            <person name="Babour A."/>
            <person name="Barbe V."/>
            <person name="Barnay S."/>
            <person name="Blanchin S."/>
            <person name="Beckerich J.-M."/>
            <person name="Beyne E."/>
            <person name="Bleykasten C."/>
            <person name="Boisrame A."/>
            <person name="Boyer J."/>
            <person name="Cattolico L."/>
            <person name="Confanioleri F."/>
            <person name="de Daruvar A."/>
            <person name="Despons L."/>
            <person name="Fabre E."/>
            <person name="Fairhead C."/>
            <person name="Ferry-Dumazet H."/>
            <person name="Groppi A."/>
            <person name="Hantraye F."/>
            <person name="Hennequin C."/>
            <person name="Jauniaux N."/>
            <person name="Joyet P."/>
            <person name="Kachouri R."/>
            <person name="Kerrest A."/>
            <person name="Koszul R."/>
            <person name="Lemaire M."/>
            <person name="Lesur I."/>
            <person name="Ma L."/>
            <person name="Muller H."/>
            <person name="Nicaud J.-M."/>
            <person name="Nikolski M."/>
            <person name="Oztas S."/>
            <person name="Ozier-Kalogeropoulos O."/>
            <person name="Pellenz S."/>
            <person name="Potier S."/>
            <person name="Richard G.-F."/>
            <person name="Straub M.-L."/>
            <person name="Suleau A."/>
            <person name="Swennen D."/>
            <person name="Tekaia F."/>
            <person name="Wesolowski-Louvel M."/>
            <person name="Westhof E."/>
            <person name="Wirth B."/>
            <person name="Zeniou-Meyer M."/>
            <person name="Zivanovic Y."/>
            <person name="Bolotin-Fukuhara M."/>
            <person name="Thierry A."/>
            <person name="Bouchier C."/>
            <person name="Caudron B."/>
            <person name="Scarpelli C."/>
            <person name="Gaillardin C."/>
            <person name="Weissenbach J."/>
            <person name="Wincker P."/>
            <person name="Souciet J.-L."/>
        </authorList>
    </citation>
    <scope>NUCLEOTIDE SEQUENCE [LARGE SCALE GENOMIC DNA]</scope>
    <source>
        <strain>ATCC 36239 / CBS 767 / BCRC 21394 / JCM 1990 / NBRC 0083 / IGC 2968</strain>
    </source>
</reference>
<evidence type="ECO:0000250" key="1"/>
<evidence type="ECO:0000305" key="2"/>
<proteinExistence type="inferred from homology"/>
<organism>
    <name type="scientific">Debaryomyces hansenii (strain ATCC 36239 / CBS 767 / BCRC 21394 / JCM 1990 / NBRC 0083 / IGC 2968)</name>
    <name type="common">Yeast</name>
    <name type="synonym">Torulaspora hansenii</name>
    <dbReference type="NCBI Taxonomy" id="284592"/>
    <lineage>
        <taxon>Eukaryota</taxon>
        <taxon>Fungi</taxon>
        <taxon>Dikarya</taxon>
        <taxon>Ascomycota</taxon>
        <taxon>Saccharomycotina</taxon>
        <taxon>Pichiomycetes</taxon>
        <taxon>Debaryomycetaceae</taxon>
        <taxon>Debaryomyces</taxon>
    </lineage>
</organism>
<accession>Q6BL58</accession>
<name>XPOT_DEBHA</name>
<comment type="function">
    <text evidence="1">tRNA nucleus export receptor which facilitates tRNA translocation across the nuclear pore complex. Involved in pre-tRNA splicing, probably by affecting the interaction of pre-tRNA with splicing endonuclease (By similarity).</text>
</comment>
<comment type="subcellular location">
    <subcellularLocation>
        <location evidence="1">Nucleus</location>
    </subcellularLocation>
    <subcellularLocation>
        <location evidence="1">Cytoplasm</location>
    </subcellularLocation>
    <text evidence="1">Shuttles between the nucleus and the cytoplasm.</text>
</comment>
<comment type="similarity">
    <text evidence="2">Belongs to the exportin family.</text>
</comment>
<keyword id="KW-0963">Cytoplasm</keyword>
<keyword id="KW-0539">Nucleus</keyword>
<keyword id="KW-1185">Reference proteome</keyword>
<keyword id="KW-0694">RNA-binding</keyword>
<keyword id="KW-0813">Transport</keyword>
<keyword id="KW-0819">tRNA processing</keyword>
<keyword id="KW-0820">tRNA-binding</keyword>
<sequence length="1000" mass="115533">MDEQISKAVEIALSGTSDLVLKNQAFEFINQIKSTEEGYKSCLDILLKSINSNSPLNQEFKFFILQVIDENITKLNNEQLYELNSDLFQYLNYVINSNINDPVYLKNKFAGIMGNLFCFTYLSINPTFLKDLLALIADNNLIAIDIYSRIIIAVHTEISDKFISRSREVQDRNNLLKDQIRTNDMNLLVDNWQKILRNPELIQHNNEVLNNFLKIIGYYINWMEITLFISNDFINIIFQYLNKPDQRNETCLTLIEVISKKMKPLNKLELISLLNLTSIINSINNDDDLEFMENIAKLSNQVGLELVIVLESSELELFDSINQQFLNLWPSIFKFLSHEYDDISQQIFPFIQQYLLTCKKFNQLASIELLSSLLNKIILKMKFDDDDDGTDDESTEQFNEVRLKLKTFQDTIAILKPELFLEAIPIVINESIFANVSDFDKVNWRNLELGLFELNTFTESLRNNLINLPKQEIGNSKPYVLVQEFLIKLINSDVVLKVDHPKIQLGFFELIVRHYNFLNTNINNQEVILRILELFSSPLGLFNNSEKVRLRTWYLFFRFVKLTKPTLNNSSFIENLFIKLQPLLVIKAELPTKDEDNDTVENGNFNNQLNLFESIGLLISLLSVDISLKVRMIDLIFQPLFNDLENCISNKDKVNQQLIALQAHHSLMAIGTFARGYDYDYNNKYSAEIVGKINNASQVVLITLENFAKFEIIRDAARFSFARFIPILNEEINNHLSKLVSIILAANNLKISELTNFLNFLGQIVHNFQSNDNIYKLLNDLLSPLLDKIFSLLKYNGENNEYESMPDIIRDKESLKKSYMNFISAIITNHSSSLLITETNKQKFPIILESFFVYAYNTSEPTVSKLAITQLINVVSVMGGHGGKINDPQDKYGESLPPLEGVDEYLMNKAVQLSFELPFQKSEFDLKDAQYRLVGQEIASLLKTYQEKRGDEYLTFLSNYLTNMGLSSELMTDFCTNLVKVDQRAFKKYFITFVTELKGK</sequence>
<dbReference type="EMBL" id="CR382138">
    <property type="protein sequence ID" value="CAG89439.2"/>
    <property type="molecule type" value="Genomic_DNA"/>
</dbReference>
<dbReference type="RefSeq" id="XP_461063.2">
    <property type="nucleotide sequence ID" value="XM_461063.1"/>
</dbReference>
<dbReference type="SMR" id="Q6BL58"/>
<dbReference type="FunCoup" id="Q6BL58">
    <property type="interactions" value="1094"/>
</dbReference>
<dbReference type="STRING" id="284592.Q6BL58"/>
<dbReference type="GeneID" id="2904082"/>
<dbReference type="KEGG" id="dha:DEHA2F16192g"/>
<dbReference type="VEuPathDB" id="FungiDB:DEHA2F16192g"/>
<dbReference type="eggNOG" id="KOG2021">
    <property type="taxonomic scope" value="Eukaryota"/>
</dbReference>
<dbReference type="HOGENOM" id="CLU_004414_0_1_1"/>
<dbReference type="InParanoid" id="Q6BL58"/>
<dbReference type="OMA" id="HEMFLFG"/>
<dbReference type="OrthoDB" id="26399at2759"/>
<dbReference type="Proteomes" id="UP000000599">
    <property type="component" value="Chromosome F"/>
</dbReference>
<dbReference type="GO" id="GO:0005737">
    <property type="term" value="C:cytoplasm"/>
    <property type="evidence" value="ECO:0007669"/>
    <property type="project" value="UniProtKB-SubCell"/>
</dbReference>
<dbReference type="GO" id="GO:0016363">
    <property type="term" value="C:nuclear matrix"/>
    <property type="evidence" value="ECO:0007669"/>
    <property type="project" value="EnsemblFungi"/>
</dbReference>
<dbReference type="GO" id="GO:0005643">
    <property type="term" value="C:nuclear pore"/>
    <property type="evidence" value="ECO:0007669"/>
    <property type="project" value="TreeGrafter"/>
</dbReference>
<dbReference type="GO" id="GO:0031267">
    <property type="term" value="F:small GTPase binding"/>
    <property type="evidence" value="ECO:0007669"/>
    <property type="project" value="EnsemblFungi"/>
</dbReference>
<dbReference type="GO" id="GO:0000049">
    <property type="term" value="F:tRNA binding"/>
    <property type="evidence" value="ECO:0007669"/>
    <property type="project" value="UniProtKB-KW"/>
</dbReference>
<dbReference type="GO" id="GO:0008033">
    <property type="term" value="P:tRNA processing"/>
    <property type="evidence" value="ECO:0007669"/>
    <property type="project" value="UniProtKB-KW"/>
</dbReference>
<dbReference type="GO" id="GO:0071528">
    <property type="term" value="P:tRNA re-export from nucleus"/>
    <property type="evidence" value="ECO:0007669"/>
    <property type="project" value="EnsemblFungi"/>
</dbReference>
<dbReference type="Gene3D" id="1.25.10.10">
    <property type="entry name" value="Leucine-rich Repeat Variant"/>
    <property type="match status" value="1"/>
</dbReference>
<dbReference type="InterPro" id="IPR011989">
    <property type="entry name" value="ARM-like"/>
</dbReference>
<dbReference type="InterPro" id="IPR016024">
    <property type="entry name" value="ARM-type_fold"/>
</dbReference>
<dbReference type="InterPro" id="IPR013598">
    <property type="entry name" value="Exportin-1/Importin-b-like"/>
</dbReference>
<dbReference type="InterPro" id="IPR045546">
    <property type="entry name" value="Exportin-T_C"/>
</dbReference>
<dbReference type="InterPro" id="IPR040017">
    <property type="entry name" value="XPOT"/>
</dbReference>
<dbReference type="PANTHER" id="PTHR15952:SF11">
    <property type="entry name" value="EXPORTIN-T"/>
    <property type="match status" value="1"/>
</dbReference>
<dbReference type="PANTHER" id="PTHR15952">
    <property type="entry name" value="EXPORTIN-T/LOS1"/>
    <property type="match status" value="1"/>
</dbReference>
<dbReference type="Pfam" id="PF19282">
    <property type="entry name" value="Exportin-T"/>
    <property type="match status" value="1"/>
</dbReference>
<dbReference type="Pfam" id="PF08389">
    <property type="entry name" value="Xpo1"/>
    <property type="match status" value="1"/>
</dbReference>
<dbReference type="SUPFAM" id="SSF48371">
    <property type="entry name" value="ARM repeat"/>
    <property type="match status" value="1"/>
</dbReference>